<organism>
    <name type="scientific">Gallus gallus</name>
    <name type="common">Chicken</name>
    <dbReference type="NCBI Taxonomy" id="9031"/>
    <lineage>
        <taxon>Eukaryota</taxon>
        <taxon>Metazoa</taxon>
        <taxon>Chordata</taxon>
        <taxon>Craniata</taxon>
        <taxon>Vertebrata</taxon>
        <taxon>Euteleostomi</taxon>
        <taxon>Archelosauria</taxon>
        <taxon>Archosauria</taxon>
        <taxon>Dinosauria</taxon>
        <taxon>Saurischia</taxon>
        <taxon>Theropoda</taxon>
        <taxon>Coelurosauria</taxon>
        <taxon>Aves</taxon>
        <taxon>Neognathae</taxon>
        <taxon>Galloanserae</taxon>
        <taxon>Galliformes</taxon>
        <taxon>Phasianidae</taxon>
        <taxon>Phasianinae</taxon>
        <taxon>Gallus</taxon>
    </lineage>
</organism>
<sequence>MHTTQKDTTYTKIFVGGLPYHTTDSSLRKYFEVFGDIEEAVVITDRQTGKSRGYGFVTMADRAAAERACKDPNPIIDGRKANVNLAYLGAKPRIMQPGFAFGVQQLHPALIQRPFGIPAHYVYPQAFVQPGVVIPHVQPAAAAASTTPYIGYTGAAYAQYSAAAAAYEQYPYAASPAAAAGYVAAGGYGYAVQQPITAAAPGTAAAAAAAFGQYQPQQLQTDRMQ</sequence>
<accession>Q5ZMA3</accession>
<gene>
    <name evidence="3" type="primary">RBM24</name>
    <name type="ORF">RCJMB04_2l21</name>
</gene>
<proteinExistence type="evidence at protein level"/>
<dbReference type="EMBL" id="AJ719481">
    <property type="protein sequence ID" value="CAG31140.1"/>
    <property type="status" value="ALT_FRAME"/>
    <property type="molecule type" value="mRNA"/>
</dbReference>
<dbReference type="RefSeq" id="NP_001012881.2">
    <property type="nucleotide sequence ID" value="NM_001012863.2"/>
</dbReference>
<dbReference type="SMR" id="Q5ZMA3"/>
<dbReference type="FunCoup" id="Q5ZMA3">
    <property type="interactions" value="302"/>
</dbReference>
<dbReference type="STRING" id="9031.ENSGALP00000020723"/>
<dbReference type="PaxDb" id="9031-ENSGALP00000042563"/>
<dbReference type="GeneID" id="420846"/>
<dbReference type="KEGG" id="gga:420846"/>
<dbReference type="CTD" id="221662"/>
<dbReference type="VEuPathDB" id="HostDB:geneid_420846"/>
<dbReference type="eggNOG" id="KOG0149">
    <property type="taxonomic scope" value="Eukaryota"/>
</dbReference>
<dbReference type="InParanoid" id="Q5ZMA3"/>
<dbReference type="OrthoDB" id="4207594at2759"/>
<dbReference type="PhylomeDB" id="Q5ZMA3"/>
<dbReference type="PRO" id="PR:Q5ZMA3"/>
<dbReference type="Proteomes" id="UP000000539">
    <property type="component" value="Unassembled WGS sequence"/>
</dbReference>
<dbReference type="GO" id="GO:0005737">
    <property type="term" value="C:cytoplasm"/>
    <property type="evidence" value="ECO:0000250"/>
    <property type="project" value="UniProtKB"/>
</dbReference>
<dbReference type="GO" id="GO:0005829">
    <property type="term" value="C:cytosol"/>
    <property type="evidence" value="ECO:0000318"/>
    <property type="project" value="GO_Central"/>
</dbReference>
<dbReference type="GO" id="GO:0005634">
    <property type="term" value="C:nucleus"/>
    <property type="evidence" value="ECO:0000318"/>
    <property type="project" value="GO_Central"/>
</dbReference>
<dbReference type="GO" id="GO:0035925">
    <property type="term" value="F:mRNA 3'-UTR AU-rich region binding"/>
    <property type="evidence" value="ECO:0000250"/>
    <property type="project" value="UniProtKB"/>
</dbReference>
<dbReference type="GO" id="GO:0003730">
    <property type="term" value="F:mRNA 3'-UTR binding"/>
    <property type="evidence" value="ECO:0000250"/>
    <property type="project" value="UniProtKB"/>
</dbReference>
<dbReference type="GO" id="GO:1990715">
    <property type="term" value="F:mRNA CDS binding"/>
    <property type="evidence" value="ECO:0000250"/>
    <property type="project" value="UniProtKB"/>
</dbReference>
<dbReference type="GO" id="GO:0097157">
    <property type="term" value="F:pre-mRNA intronic binding"/>
    <property type="evidence" value="ECO:0000250"/>
    <property type="project" value="UniProtKB"/>
</dbReference>
<dbReference type="GO" id="GO:1990825">
    <property type="term" value="F:sequence-specific mRNA binding"/>
    <property type="evidence" value="ECO:0000250"/>
    <property type="project" value="UniProtKB"/>
</dbReference>
<dbReference type="GO" id="GO:0061158">
    <property type="term" value="P:3'-UTR-mediated mRNA destabilization"/>
    <property type="evidence" value="ECO:0000250"/>
    <property type="project" value="UniProtKB"/>
</dbReference>
<dbReference type="GO" id="GO:0030154">
    <property type="term" value="P:cell differentiation"/>
    <property type="evidence" value="ECO:0007669"/>
    <property type="project" value="UniProtKB-KW"/>
</dbReference>
<dbReference type="GO" id="GO:0006974">
    <property type="term" value="P:DNA damage response"/>
    <property type="evidence" value="ECO:0000250"/>
    <property type="project" value="UniProtKB"/>
</dbReference>
<dbReference type="GO" id="GO:0061157">
    <property type="term" value="P:mRNA destabilization"/>
    <property type="evidence" value="ECO:0000250"/>
    <property type="project" value="UniProtKB"/>
</dbReference>
<dbReference type="GO" id="GO:0006397">
    <property type="term" value="P:mRNA processing"/>
    <property type="evidence" value="ECO:0007669"/>
    <property type="project" value="UniProtKB-KW"/>
</dbReference>
<dbReference type="GO" id="GO:0048255">
    <property type="term" value="P:mRNA stabilization"/>
    <property type="evidence" value="ECO:0000250"/>
    <property type="project" value="UniProtKB"/>
</dbReference>
<dbReference type="GO" id="GO:2000766">
    <property type="term" value="P:negative regulation of cytoplasmic translation"/>
    <property type="evidence" value="ECO:0000250"/>
    <property type="project" value="UniProtKB"/>
</dbReference>
<dbReference type="GO" id="GO:1905870">
    <property type="term" value="P:positive regulation of 3'-UTR-mediated mRNA stabilization"/>
    <property type="evidence" value="ECO:0000250"/>
    <property type="project" value="UniProtKB"/>
</dbReference>
<dbReference type="GO" id="GO:0045663">
    <property type="term" value="P:positive regulation of myoblast differentiation"/>
    <property type="evidence" value="ECO:0000315"/>
    <property type="project" value="UniProtKB"/>
</dbReference>
<dbReference type="GO" id="GO:0010831">
    <property type="term" value="P:positive regulation of myotube differentiation"/>
    <property type="evidence" value="ECO:0000250"/>
    <property type="project" value="UniProtKB"/>
</dbReference>
<dbReference type="GO" id="GO:1902811">
    <property type="term" value="P:positive regulation of skeletal muscle fiber differentiation"/>
    <property type="evidence" value="ECO:0000250"/>
    <property type="project" value="UniProtKB"/>
</dbReference>
<dbReference type="GO" id="GO:2000738">
    <property type="term" value="P:positive regulation of stem cell differentiation"/>
    <property type="evidence" value="ECO:0000250"/>
    <property type="project" value="UniProtKB"/>
</dbReference>
<dbReference type="GO" id="GO:0000381">
    <property type="term" value="P:regulation of alternative mRNA splicing, via spliceosome"/>
    <property type="evidence" value="ECO:0000250"/>
    <property type="project" value="UniProtKB"/>
</dbReference>
<dbReference type="GO" id="GO:0043488">
    <property type="term" value="P:regulation of mRNA stability"/>
    <property type="evidence" value="ECO:0000250"/>
    <property type="project" value="UniProtKB"/>
</dbReference>
<dbReference type="GO" id="GO:0010830">
    <property type="term" value="P:regulation of myotube differentiation"/>
    <property type="evidence" value="ECO:0000250"/>
    <property type="project" value="UniProtKB"/>
</dbReference>
<dbReference type="GO" id="GO:0008380">
    <property type="term" value="P:RNA splicing"/>
    <property type="evidence" value="ECO:0007669"/>
    <property type="project" value="UniProtKB-KW"/>
</dbReference>
<dbReference type="CDD" id="cd12384">
    <property type="entry name" value="RRM_RBM24_RBM38_like"/>
    <property type="match status" value="1"/>
</dbReference>
<dbReference type="FunFam" id="3.30.70.330:FF:000077">
    <property type="entry name" value="RNA-binding motif protein 24"/>
    <property type="match status" value="1"/>
</dbReference>
<dbReference type="Gene3D" id="3.30.70.330">
    <property type="match status" value="1"/>
</dbReference>
<dbReference type="InterPro" id="IPR012677">
    <property type="entry name" value="Nucleotide-bd_a/b_plait_sf"/>
</dbReference>
<dbReference type="InterPro" id="IPR035979">
    <property type="entry name" value="RBD_domain_sf"/>
</dbReference>
<dbReference type="InterPro" id="IPR050886">
    <property type="entry name" value="RNA-binding_reg"/>
</dbReference>
<dbReference type="InterPro" id="IPR000504">
    <property type="entry name" value="RRM_dom"/>
</dbReference>
<dbReference type="PANTHER" id="PTHR48024">
    <property type="entry name" value="GEO13361P1-RELATED"/>
    <property type="match status" value="1"/>
</dbReference>
<dbReference type="PANTHER" id="PTHR48024:SF10">
    <property type="entry name" value="RNA-BINDING PROTEIN 24"/>
    <property type="match status" value="1"/>
</dbReference>
<dbReference type="Pfam" id="PF00076">
    <property type="entry name" value="RRM_1"/>
    <property type="match status" value="1"/>
</dbReference>
<dbReference type="SMART" id="SM00360">
    <property type="entry name" value="RRM"/>
    <property type="match status" value="1"/>
</dbReference>
<dbReference type="SUPFAM" id="SSF54928">
    <property type="entry name" value="RNA-binding domain, RBD"/>
    <property type="match status" value="1"/>
</dbReference>
<dbReference type="PROSITE" id="PS50102">
    <property type="entry name" value="RRM"/>
    <property type="match status" value="1"/>
</dbReference>
<comment type="function">
    <text evidence="1 3 5">Multifunctional RNA-binding protein involved in the regulation of pre-mRNA splicing, mRNA stability and mRNA translation important for cell fate decision and differentiation. Plays a major role in pre-mRNA alternative splicing regulation. Mediates preferentially muscle-specific exon inclusion in numerous mRNAs important for striated cardiac and skeletal muscle cell differentiation. Binds to intronic splicing enhancer (ISE) composed of stretches of GU-rich motifs localized in flanking intron of exon that will be included by alternative splicing. Involved in embryonic stem cell (ESC) transition to cardiac cell differentiation by promoting pre-mRNA alternative splicing events of several pluripotency and/or differentiation genes. Plays a role in the regulation of mRNA stability and mRNA translation to which it is bound. Involved in myogenic differentiation by regulating MYOG levels. Binds to a huge amount of mRNAs (By similarity). Involved in embryonic heart development and myogenic differentiation of somitic muscle progenitors (PubMed:25217815).</text>
</comment>
<comment type="subcellular location">
    <subcellularLocation>
        <location evidence="2">Nucleus</location>
    </subcellularLocation>
    <subcellularLocation>
        <location evidence="1">Cytoplasm</location>
    </subcellularLocation>
</comment>
<comment type="developmental stage">
    <text evidence="5">Expressed in differentiated myotomal muscle progenitors in embryos at 3 days of development (at protein level). Expressed in somites in embryos at 3 and 3.5 days of development. Expressed in the mesodermal core of the first and second branchial arches at 3 days of development. Expressed in forelimbs and hindlimbs at 3.5 days of development. Expressed in non-muscle territories including lens and otic vesicle at 3 days of development.</text>
</comment>
<comment type="domain">
    <text evidence="3">The RRM domain is necessary for mRNA stability and mRNA translation regulation.</text>
</comment>
<comment type="sequence caution" evidence="6">
    <conflict type="frameshift">
        <sequence resource="EMBL-CDS" id="CAG31140"/>
    </conflict>
</comment>
<keyword id="KW-0963">Cytoplasm</keyword>
<keyword id="KW-0221">Differentiation</keyword>
<keyword id="KW-0507">mRNA processing</keyword>
<keyword id="KW-0508">mRNA splicing</keyword>
<keyword id="KW-0539">Nucleus</keyword>
<keyword id="KW-1185">Reference proteome</keyword>
<keyword id="KW-0694">RNA-binding</keyword>
<keyword id="KW-0810">Translation regulation</keyword>
<protein>
    <recommendedName>
        <fullName evidence="6">RNA-binding protein 24</fullName>
    </recommendedName>
    <alternativeName>
        <fullName evidence="3">RNA-binding motif protein 24</fullName>
    </alternativeName>
</protein>
<evidence type="ECO:0000250" key="1">
    <source>
        <dbReference type="UniProtKB" id="D3Z4I3"/>
    </source>
</evidence>
<evidence type="ECO:0000250" key="2">
    <source>
        <dbReference type="UniProtKB" id="Q6GQD3"/>
    </source>
</evidence>
<evidence type="ECO:0000250" key="3">
    <source>
        <dbReference type="UniProtKB" id="Q9BX46"/>
    </source>
</evidence>
<evidence type="ECO:0000255" key="4">
    <source>
        <dbReference type="PROSITE-ProRule" id="PRU00176"/>
    </source>
</evidence>
<evidence type="ECO:0000269" key="5">
    <source>
    </source>
</evidence>
<evidence type="ECO:0000305" key="6"/>
<feature type="chain" id="PRO_0000273371" description="RNA-binding protein 24">
    <location>
        <begin position="1"/>
        <end position="225"/>
    </location>
</feature>
<feature type="domain" description="RRM" evidence="4">
    <location>
        <begin position="11"/>
        <end position="88"/>
    </location>
</feature>
<reference key="1">
    <citation type="journal article" date="2005" name="Genome Biol.">
        <title>Full-length cDNAs from chicken bursal lymphocytes to facilitate gene function analysis.</title>
        <authorList>
            <person name="Caldwell R.B."/>
            <person name="Kierzek A.M."/>
            <person name="Arakawa H."/>
            <person name="Bezzubov Y."/>
            <person name="Zaim J."/>
            <person name="Fiedler P."/>
            <person name="Kutter S."/>
            <person name="Blagodatski A."/>
            <person name="Kostovska D."/>
            <person name="Koter M."/>
            <person name="Plachy J."/>
            <person name="Carninci P."/>
            <person name="Hayashizaki Y."/>
            <person name="Buerstedde J.-M."/>
        </authorList>
    </citation>
    <scope>NUCLEOTIDE SEQUENCE [LARGE SCALE MRNA]</scope>
    <source>
        <strain>CB</strain>
        <tissue>Bursa of Fabricius</tissue>
    </source>
</reference>
<reference key="2">
    <citation type="journal article" date="2014" name="Mech. Dev.">
        <title>The RNA-binding protein Rbm24 is transiently expressed in myoblasts and is required for myogenic differentiation during vertebrate development.</title>
        <authorList>
            <person name="Grifone R."/>
            <person name="Xie X."/>
            <person name="Bourgeois A."/>
            <person name="Saquet A."/>
            <person name="Duprez D."/>
            <person name="Shi D.L."/>
        </authorList>
    </citation>
    <scope>FUNCTION</scope>
    <scope>DEVELOPMENTAL STAGE</scope>
</reference>
<name>RBM24_CHICK</name>